<gene>
    <name evidence="1" type="primary">leuS</name>
    <name type="ordered locus">P9215_10031</name>
</gene>
<reference key="1">
    <citation type="journal article" date="2007" name="PLoS Genet.">
        <title>Patterns and implications of gene gain and loss in the evolution of Prochlorococcus.</title>
        <authorList>
            <person name="Kettler G.C."/>
            <person name="Martiny A.C."/>
            <person name="Huang K."/>
            <person name="Zucker J."/>
            <person name="Coleman M.L."/>
            <person name="Rodrigue S."/>
            <person name="Chen F."/>
            <person name="Lapidus A."/>
            <person name="Ferriera S."/>
            <person name="Johnson J."/>
            <person name="Steglich C."/>
            <person name="Church G.M."/>
            <person name="Richardson P."/>
            <person name="Chisholm S.W."/>
        </authorList>
    </citation>
    <scope>NUCLEOTIDE SEQUENCE [LARGE SCALE GENOMIC DNA]</scope>
    <source>
        <strain>MIT 9215</strain>
    </source>
</reference>
<keyword id="KW-0030">Aminoacyl-tRNA synthetase</keyword>
<keyword id="KW-0067">ATP-binding</keyword>
<keyword id="KW-0963">Cytoplasm</keyword>
<keyword id="KW-0436">Ligase</keyword>
<keyword id="KW-0547">Nucleotide-binding</keyword>
<keyword id="KW-0648">Protein biosynthesis</keyword>
<dbReference type="EC" id="6.1.1.4" evidence="1"/>
<dbReference type="EMBL" id="CP000825">
    <property type="protein sequence ID" value="ABV50618.1"/>
    <property type="molecule type" value="Genomic_DNA"/>
</dbReference>
<dbReference type="RefSeq" id="WP_012007705.1">
    <property type="nucleotide sequence ID" value="NC_009840.1"/>
</dbReference>
<dbReference type="SMR" id="A8G4T7"/>
<dbReference type="STRING" id="93060.P9215_10031"/>
<dbReference type="KEGG" id="pmh:P9215_10031"/>
<dbReference type="eggNOG" id="COG0495">
    <property type="taxonomic scope" value="Bacteria"/>
</dbReference>
<dbReference type="HOGENOM" id="CLU_004427_0_0_3"/>
<dbReference type="OrthoDB" id="9810365at2"/>
<dbReference type="Proteomes" id="UP000002014">
    <property type="component" value="Chromosome"/>
</dbReference>
<dbReference type="GO" id="GO:0005829">
    <property type="term" value="C:cytosol"/>
    <property type="evidence" value="ECO:0007669"/>
    <property type="project" value="TreeGrafter"/>
</dbReference>
<dbReference type="GO" id="GO:0002161">
    <property type="term" value="F:aminoacyl-tRNA deacylase activity"/>
    <property type="evidence" value="ECO:0007669"/>
    <property type="project" value="InterPro"/>
</dbReference>
<dbReference type="GO" id="GO:0005524">
    <property type="term" value="F:ATP binding"/>
    <property type="evidence" value="ECO:0007669"/>
    <property type="project" value="UniProtKB-UniRule"/>
</dbReference>
<dbReference type="GO" id="GO:0004823">
    <property type="term" value="F:leucine-tRNA ligase activity"/>
    <property type="evidence" value="ECO:0007669"/>
    <property type="project" value="UniProtKB-UniRule"/>
</dbReference>
<dbReference type="GO" id="GO:0006429">
    <property type="term" value="P:leucyl-tRNA aminoacylation"/>
    <property type="evidence" value="ECO:0007669"/>
    <property type="project" value="UniProtKB-UniRule"/>
</dbReference>
<dbReference type="CDD" id="cd07958">
    <property type="entry name" value="Anticodon_Ia_Leu_BEm"/>
    <property type="match status" value="1"/>
</dbReference>
<dbReference type="CDD" id="cd00812">
    <property type="entry name" value="LeuRS_core"/>
    <property type="match status" value="1"/>
</dbReference>
<dbReference type="FunFam" id="3.40.50.620:FF:000003">
    <property type="entry name" value="Leucine--tRNA ligase"/>
    <property type="match status" value="1"/>
</dbReference>
<dbReference type="FunFam" id="1.10.730.10:FF:000011">
    <property type="entry name" value="Leucine--tRNA ligase chloroplastic/mitochondrial"/>
    <property type="match status" value="1"/>
</dbReference>
<dbReference type="Gene3D" id="3.40.50.620">
    <property type="entry name" value="HUPs"/>
    <property type="match status" value="2"/>
</dbReference>
<dbReference type="Gene3D" id="1.10.730.10">
    <property type="entry name" value="Isoleucyl-tRNA Synthetase, Domain 1"/>
    <property type="match status" value="1"/>
</dbReference>
<dbReference type="HAMAP" id="MF_00049_B">
    <property type="entry name" value="Leu_tRNA_synth_B"/>
    <property type="match status" value="1"/>
</dbReference>
<dbReference type="InterPro" id="IPR001412">
    <property type="entry name" value="aa-tRNA-synth_I_CS"/>
</dbReference>
<dbReference type="InterPro" id="IPR002300">
    <property type="entry name" value="aa-tRNA-synth_Ia"/>
</dbReference>
<dbReference type="InterPro" id="IPR002302">
    <property type="entry name" value="Leu-tRNA-ligase"/>
</dbReference>
<dbReference type="InterPro" id="IPR025709">
    <property type="entry name" value="Leu_tRNA-synth_edit"/>
</dbReference>
<dbReference type="InterPro" id="IPR013155">
    <property type="entry name" value="M/V/L/I-tRNA-synth_anticd-bd"/>
</dbReference>
<dbReference type="InterPro" id="IPR015413">
    <property type="entry name" value="Methionyl/Leucyl_tRNA_Synth"/>
</dbReference>
<dbReference type="InterPro" id="IPR014729">
    <property type="entry name" value="Rossmann-like_a/b/a_fold"/>
</dbReference>
<dbReference type="InterPro" id="IPR009080">
    <property type="entry name" value="tRNAsynth_Ia_anticodon-bd"/>
</dbReference>
<dbReference type="InterPro" id="IPR009008">
    <property type="entry name" value="Val/Leu/Ile-tRNA-synth_edit"/>
</dbReference>
<dbReference type="NCBIfam" id="TIGR00396">
    <property type="entry name" value="leuS_bact"/>
    <property type="match status" value="1"/>
</dbReference>
<dbReference type="PANTHER" id="PTHR43740:SF2">
    <property type="entry name" value="LEUCINE--TRNA LIGASE, MITOCHONDRIAL"/>
    <property type="match status" value="1"/>
</dbReference>
<dbReference type="PANTHER" id="PTHR43740">
    <property type="entry name" value="LEUCYL-TRNA SYNTHETASE"/>
    <property type="match status" value="1"/>
</dbReference>
<dbReference type="Pfam" id="PF08264">
    <property type="entry name" value="Anticodon_1"/>
    <property type="match status" value="1"/>
</dbReference>
<dbReference type="Pfam" id="PF00133">
    <property type="entry name" value="tRNA-synt_1"/>
    <property type="match status" value="2"/>
</dbReference>
<dbReference type="Pfam" id="PF13603">
    <property type="entry name" value="tRNA-synt_1_2"/>
    <property type="match status" value="1"/>
</dbReference>
<dbReference type="Pfam" id="PF09334">
    <property type="entry name" value="tRNA-synt_1g"/>
    <property type="match status" value="1"/>
</dbReference>
<dbReference type="PRINTS" id="PR00985">
    <property type="entry name" value="TRNASYNTHLEU"/>
</dbReference>
<dbReference type="SUPFAM" id="SSF47323">
    <property type="entry name" value="Anticodon-binding domain of a subclass of class I aminoacyl-tRNA synthetases"/>
    <property type="match status" value="1"/>
</dbReference>
<dbReference type="SUPFAM" id="SSF52374">
    <property type="entry name" value="Nucleotidylyl transferase"/>
    <property type="match status" value="1"/>
</dbReference>
<dbReference type="SUPFAM" id="SSF50677">
    <property type="entry name" value="ValRS/IleRS/LeuRS editing domain"/>
    <property type="match status" value="1"/>
</dbReference>
<dbReference type="PROSITE" id="PS00178">
    <property type="entry name" value="AA_TRNA_LIGASE_I"/>
    <property type="match status" value="1"/>
</dbReference>
<organism>
    <name type="scientific">Prochlorococcus marinus (strain MIT 9215)</name>
    <dbReference type="NCBI Taxonomy" id="93060"/>
    <lineage>
        <taxon>Bacteria</taxon>
        <taxon>Bacillati</taxon>
        <taxon>Cyanobacteriota</taxon>
        <taxon>Cyanophyceae</taxon>
        <taxon>Synechococcales</taxon>
        <taxon>Prochlorococcaceae</taxon>
        <taxon>Prochlorococcus</taxon>
    </lineage>
</organism>
<name>SYL_PROM2</name>
<protein>
    <recommendedName>
        <fullName evidence="1">Leucine--tRNA ligase</fullName>
        <ecNumber evidence="1">6.1.1.4</ecNumber>
    </recommendedName>
    <alternativeName>
        <fullName evidence="1">Leucyl-tRNA synthetase</fullName>
        <shortName evidence="1">LeuRS</shortName>
    </alternativeName>
</protein>
<proteinExistence type="inferred from homology"/>
<sequence length="856" mass="98952">MISPDKQYESFTNLYNPSEIEKKWQLIWTENNLYKTDELTENSDKFYALSMFPYPSGNLHMGHVRNYVITDLIARFHRFKGKSVLHPMGWDAFGLPAENAAIERGISPSVWTKQNISHMRSQLKLLGLSVDWDREFATCDENYYIWTQYLFLELYKAGLVYQKESEVNWDPVDNTVLANEQVDSEGKSWRSGAVVEKKLLKQWFLRITNYADELLKDLEKLDNWPERVKIMQDNWIGKSIGTNINFNLNTNPEEKITVFTTRPDTLFGVTYLAISVNHSLIKYISDQETIQDIENLKQYLKNNKNNELEKIGIKTSLIAINPINSEPIPIWVASYVLDEYGTGAVMGVPAHDQRDFEFAKKNNIDIKQVIINDKSEKTNELDKAYVENGYLMNSDQYNFMENTIAKLKISEEGVDNGWAENKIQYRLRDWLISRQRYWGCPIPIVNCKKCGSVPLKQSELPVALPKDIDISANKINALGDNNHWINTTCPKCGIAAKKETDTMDTFMCSSWYFLRYPSSKCSNKPFEKIEINKWLPVDQYVGGVEHAILHLLYARFFTKALRDNELFEIDEPFKKLLTQGMVQAAAYKNNKTGKYVSPSDINDLSNPTDPIDNTKLEVLFEKMSKSKYNGIDPESVIKKYGADTARMFILFKAPPEKDLEWGDTDVEGQFRFLNRIWKLYINCAKDINSKSNSYPDREKSLIKSMNIAIKEISNDILNNQFNTAISELMKFYNSLANSINDVNNTLKIEALKTFCILLAPFAPHIAEEIWHLIGFKKSVHLEYWPSFNAEALKEDSYELVIQVNGKVRDKVKINNDMSEDQIKELTLKRPNILKWTQDKEIRKIIIVKGKIINIVV</sequence>
<evidence type="ECO:0000255" key="1">
    <source>
        <dbReference type="HAMAP-Rule" id="MF_00049"/>
    </source>
</evidence>
<feature type="chain" id="PRO_1000057346" description="Leucine--tRNA ligase">
    <location>
        <begin position="1"/>
        <end position="856"/>
    </location>
</feature>
<feature type="short sequence motif" description="'HIGH' region">
    <location>
        <begin position="53"/>
        <end position="63"/>
    </location>
</feature>
<feature type="short sequence motif" description="'KMSKS' region">
    <location>
        <begin position="622"/>
        <end position="626"/>
    </location>
</feature>
<feature type="binding site" evidence="1">
    <location>
        <position position="625"/>
    </location>
    <ligand>
        <name>ATP</name>
        <dbReference type="ChEBI" id="CHEBI:30616"/>
    </ligand>
</feature>
<comment type="catalytic activity">
    <reaction evidence="1">
        <text>tRNA(Leu) + L-leucine + ATP = L-leucyl-tRNA(Leu) + AMP + diphosphate</text>
        <dbReference type="Rhea" id="RHEA:11688"/>
        <dbReference type="Rhea" id="RHEA-COMP:9613"/>
        <dbReference type="Rhea" id="RHEA-COMP:9622"/>
        <dbReference type="ChEBI" id="CHEBI:30616"/>
        <dbReference type="ChEBI" id="CHEBI:33019"/>
        <dbReference type="ChEBI" id="CHEBI:57427"/>
        <dbReference type="ChEBI" id="CHEBI:78442"/>
        <dbReference type="ChEBI" id="CHEBI:78494"/>
        <dbReference type="ChEBI" id="CHEBI:456215"/>
        <dbReference type="EC" id="6.1.1.4"/>
    </reaction>
</comment>
<comment type="subcellular location">
    <subcellularLocation>
        <location evidence="1">Cytoplasm</location>
    </subcellularLocation>
</comment>
<comment type="similarity">
    <text evidence="1">Belongs to the class-I aminoacyl-tRNA synthetase family.</text>
</comment>
<accession>A8G4T7</accession>